<comment type="function">
    <text evidence="1">Specifically methylates the pseudouridine at position 1915 (m3Psi1915) in 23S rRNA.</text>
</comment>
<comment type="catalytic activity">
    <reaction evidence="1">
        <text>pseudouridine(1915) in 23S rRNA + S-adenosyl-L-methionine = N(3)-methylpseudouridine(1915) in 23S rRNA + S-adenosyl-L-homocysteine + H(+)</text>
        <dbReference type="Rhea" id="RHEA:42752"/>
        <dbReference type="Rhea" id="RHEA-COMP:10221"/>
        <dbReference type="Rhea" id="RHEA-COMP:10222"/>
        <dbReference type="ChEBI" id="CHEBI:15378"/>
        <dbReference type="ChEBI" id="CHEBI:57856"/>
        <dbReference type="ChEBI" id="CHEBI:59789"/>
        <dbReference type="ChEBI" id="CHEBI:65314"/>
        <dbReference type="ChEBI" id="CHEBI:74486"/>
        <dbReference type="EC" id="2.1.1.177"/>
    </reaction>
</comment>
<comment type="subunit">
    <text evidence="1">Homodimer.</text>
</comment>
<comment type="subcellular location">
    <subcellularLocation>
        <location evidence="1">Cytoplasm</location>
    </subcellularLocation>
</comment>
<comment type="similarity">
    <text evidence="1">Belongs to the RNA methyltransferase RlmH family.</text>
</comment>
<gene>
    <name evidence="1" type="primary">rlmH</name>
    <name type="ordered locus">A1S_1029</name>
</gene>
<reference key="1">
    <citation type="journal article" date="2007" name="Genes Dev.">
        <title>New insights into Acinetobacter baumannii pathogenesis revealed by high-density pyrosequencing and transposon mutagenesis.</title>
        <authorList>
            <person name="Smith M.G."/>
            <person name="Gianoulis T.A."/>
            <person name="Pukatzki S."/>
            <person name="Mekalanos J.J."/>
            <person name="Ornston L.N."/>
            <person name="Gerstein M."/>
            <person name="Snyder M."/>
        </authorList>
    </citation>
    <scope>NUCLEOTIDE SEQUENCE [LARGE SCALE GENOMIC DNA]</scope>
    <source>
        <strain>ATCC 17978 / DSM 105126 / CIP 53.77 / LMG 1025 / NCDC KC755 / 5377</strain>
    </source>
</reference>
<protein>
    <recommendedName>
        <fullName evidence="1">Ribosomal RNA large subunit methyltransferase H</fullName>
        <ecNumber evidence="1">2.1.1.177</ecNumber>
    </recommendedName>
    <alternativeName>
        <fullName evidence="1">23S rRNA (pseudouridine1915-N3)-methyltransferase</fullName>
    </alternativeName>
    <alternativeName>
        <fullName evidence="1">23S rRNA m3Psi1915 methyltransferase</fullName>
    </alternativeName>
    <alternativeName>
        <fullName evidence="1">rRNA (pseudouridine-N3-)-methyltransferase RlmH</fullName>
    </alternativeName>
</protein>
<organism>
    <name type="scientific">Acinetobacter baumannii (strain ATCC 17978 / DSM 105126 / CIP 53.77 / LMG 1025 / NCDC KC755 / 5377)</name>
    <dbReference type="NCBI Taxonomy" id="400667"/>
    <lineage>
        <taxon>Bacteria</taxon>
        <taxon>Pseudomonadati</taxon>
        <taxon>Pseudomonadota</taxon>
        <taxon>Gammaproteobacteria</taxon>
        <taxon>Moraxellales</taxon>
        <taxon>Moraxellaceae</taxon>
        <taxon>Acinetobacter</taxon>
        <taxon>Acinetobacter calcoaceticus/baumannii complex</taxon>
    </lineage>
</organism>
<accession>A3M3G7</accession>
<proteinExistence type="inferred from homology"/>
<sequence>MKIRILTIGQKMPAWVLTGFEDYFKRIQPFVQTQVIELPMAKRGKNDSEADILKYCQIEGESILNALKPNETLIALEVGGRELSTEKLADTMKQWMLEGNDVALAIGGPDGLSDQVRKAAAWHWSLSKLTMPHPLVRILLIEQLYRAMSINHNHPYHRA</sequence>
<keyword id="KW-0963">Cytoplasm</keyword>
<keyword id="KW-0489">Methyltransferase</keyword>
<keyword id="KW-0698">rRNA processing</keyword>
<keyword id="KW-0949">S-adenosyl-L-methionine</keyword>
<keyword id="KW-0808">Transferase</keyword>
<name>RLMH_ACIBT</name>
<dbReference type="EC" id="2.1.1.177" evidence="1"/>
<dbReference type="EMBL" id="CP000521">
    <property type="protein sequence ID" value="ABO11461.2"/>
    <property type="molecule type" value="Genomic_DNA"/>
</dbReference>
<dbReference type="RefSeq" id="WP_000702193.1">
    <property type="nucleotide sequence ID" value="NZ_CP053098.1"/>
</dbReference>
<dbReference type="SMR" id="A3M3G7"/>
<dbReference type="GeneID" id="92892993"/>
<dbReference type="KEGG" id="acb:A1S_1029"/>
<dbReference type="HOGENOM" id="CLU_100552_1_0_6"/>
<dbReference type="GO" id="GO:0005737">
    <property type="term" value="C:cytoplasm"/>
    <property type="evidence" value="ECO:0007669"/>
    <property type="project" value="UniProtKB-SubCell"/>
</dbReference>
<dbReference type="GO" id="GO:0070038">
    <property type="term" value="F:rRNA (pseudouridine-N3-)-methyltransferase activity"/>
    <property type="evidence" value="ECO:0007669"/>
    <property type="project" value="UniProtKB-UniRule"/>
</dbReference>
<dbReference type="CDD" id="cd18081">
    <property type="entry name" value="RlmH-like"/>
    <property type="match status" value="1"/>
</dbReference>
<dbReference type="Gene3D" id="3.40.1280.10">
    <property type="match status" value="1"/>
</dbReference>
<dbReference type="HAMAP" id="MF_00658">
    <property type="entry name" value="23SrRNA_methyltr_H"/>
    <property type="match status" value="1"/>
</dbReference>
<dbReference type="InterPro" id="IPR029028">
    <property type="entry name" value="Alpha/beta_knot_MTases"/>
</dbReference>
<dbReference type="InterPro" id="IPR003742">
    <property type="entry name" value="RlmH-like"/>
</dbReference>
<dbReference type="InterPro" id="IPR029026">
    <property type="entry name" value="tRNA_m1G_MTases_N"/>
</dbReference>
<dbReference type="NCBIfam" id="NF000986">
    <property type="entry name" value="PRK00103.1-4"/>
    <property type="match status" value="1"/>
</dbReference>
<dbReference type="NCBIfam" id="TIGR00246">
    <property type="entry name" value="tRNA_RlmH_YbeA"/>
    <property type="match status" value="1"/>
</dbReference>
<dbReference type="PANTHER" id="PTHR33603">
    <property type="entry name" value="METHYLTRANSFERASE"/>
    <property type="match status" value="1"/>
</dbReference>
<dbReference type="PANTHER" id="PTHR33603:SF1">
    <property type="entry name" value="RIBOSOMAL RNA LARGE SUBUNIT METHYLTRANSFERASE H"/>
    <property type="match status" value="1"/>
</dbReference>
<dbReference type="Pfam" id="PF02590">
    <property type="entry name" value="SPOUT_MTase"/>
    <property type="match status" value="1"/>
</dbReference>
<dbReference type="PIRSF" id="PIRSF004505">
    <property type="entry name" value="MT_bac"/>
    <property type="match status" value="1"/>
</dbReference>
<dbReference type="SUPFAM" id="SSF75217">
    <property type="entry name" value="alpha/beta knot"/>
    <property type="match status" value="1"/>
</dbReference>
<feature type="chain" id="PRO_0000366551" description="Ribosomal RNA large subunit methyltransferase H">
    <location>
        <begin position="1"/>
        <end position="159"/>
    </location>
</feature>
<feature type="binding site" evidence="1">
    <location>
        <position position="76"/>
    </location>
    <ligand>
        <name>S-adenosyl-L-methionine</name>
        <dbReference type="ChEBI" id="CHEBI:59789"/>
    </ligand>
</feature>
<feature type="binding site" evidence="1">
    <location>
        <position position="107"/>
    </location>
    <ligand>
        <name>S-adenosyl-L-methionine</name>
        <dbReference type="ChEBI" id="CHEBI:59789"/>
    </ligand>
</feature>
<feature type="binding site" evidence="1">
    <location>
        <begin position="126"/>
        <end position="131"/>
    </location>
    <ligand>
        <name>S-adenosyl-L-methionine</name>
        <dbReference type="ChEBI" id="CHEBI:59789"/>
    </ligand>
</feature>
<evidence type="ECO:0000255" key="1">
    <source>
        <dbReference type="HAMAP-Rule" id="MF_00658"/>
    </source>
</evidence>